<reference key="1">
    <citation type="journal article" date="1997" name="J. Bacteriol.">
        <title>Complete genome sequence of Methanobacterium thermoautotrophicum deltaH: functional analysis and comparative genomics.</title>
        <authorList>
            <person name="Smith D.R."/>
            <person name="Doucette-Stamm L.A."/>
            <person name="Deloughery C."/>
            <person name="Lee H.-M."/>
            <person name="Dubois J."/>
            <person name="Aldredge T."/>
            <person name="Bashirzadeh R."/>
            <person name="Blakely D."/>
            <person name="Cook R."/>
            <person name="Gilbert K."/>
            <person name="Harrison D."/>
            <person name="Hoang L."/>
            <person name="Keagle P."/>
            <person name="Lumm W."/>
            <person name="Pothier B."/>
            <person name="Qiu D."/>
            <person name="Spadafora R."/>
            <person name="Vicare R."/>
            <person name="Wang Y."/>
            <person name="Wierzbowski J."/>
            <person name="Gibson R."/>
            <person name="Jiwani N."/>
            <person name="Caruso A."/>
            <person name="Bush D."/>
            <person name="Safer H."/>
            <person name="Patwell D."/>
            <person name="Prabhakar S."/>
            <person name="McDougall S."/>
            <person name="Shimer G."/>
            <person name="Goyal A."/>
            <person name="Pietrovski S."/>
            <person name="Church G.M."/>
            <person name="Daniels C.J."/>
            <person name="Mao J.-I."/>
            <person name="Rice P."/>
            <person name="Noelling J."/>
            <person name="Reeve J.N."/>
        </authorList>
    </citation>
    <scope>NUCLEOTIDE SEQUENCE [LARGE SCALE GENOMIC DNA]</scope>
    <source>
        <strain>ATCC 29096 / DSM 1053 / JCM 10044 / NBRC 100330 / Delta H</strain>
    </source>
</reference>
<proteinExistence type="inferred from homology"/>
<evidence type="ECO:0000255" key="1">
    <source>
        <dbReference type="HAMAP-Rule" id="MF_01975"/>
    </source>
</evidence>
<comment type="function">
    <text evidence="1">Removes the N-terminal methionine from nascent proteins. The N-terminal methionine is often cleaved when the second residue in the primary sequence is small and uncharged (Met-Ala-, Cys, Gly, Pro, Ser, Thr, or Val).</text>
</comment>
<comment type="catalytic activity">
    <reaction evidence="1">
        <text>Release of N-terminal amino acids, preferentially methionine, from peptides and arylamides.</text>
        <dbReference type="EC" id="3.4.11.18"/>
    </reaction>
</comment>
<comment type="cofactor">
    <cofactor evidence="1">
        <name>Co(2+)</name>
        <dbReference type="ChEBI" id="CHEBI:48828"/>
    </cofactor>
    <cofactor evidence="1">
        <name>Zn(2+)</name>
        <dbReference type="ChEBI" id="CHEBI:29105"/>
    </cofactor>
    <cofactor evidence="1">
        <name>Mn(2+)</name>
        <dbReference type="ChEBI" id="CHEBI:29035"/>
    </cofactor>
    <cofactor evidence="1">
        <name>Fe(2+)</name>
        <dbReference type="ChEBI" id="CHEBI:29033"/>
    </cofactor>
    <text evidence="1">Binds 2 divalent metal cations per subunit. Has a high-affinity and a low affinity metal-binding site. The true nature of the physiological cofactor is under debate. The enzyme is active with cobalt, zinc, manganese or divalent iron ions. Most likely, methionine aminopeptidases function as mononuclear Fe(2+)-metalloproteases under physiological conditions, and the catalytically relevant metal-binding site has been assigned to the histidine-containing high-affinity site.</text>
</comment>
<comment type="subunit">
    <text evidence="1">Monomer.</text>
</comment>
<comment type="similarity">
    <text evidence="1">Belongs to the peptidase M24A family. Methionine aminopeptidase archaeal type 2 subfamily.</text>
</comment>
<name>MAP2_METTH</name>
<keyword id="KW-0031">Aminopeptidase</keyword>
<keyword id="KW-0378">Hydrolase</keyword>
<keyword id="KW-0479">Metal-binding</keyword>
<keyword id="KW-0645">Protease</keyword>
<keyword id="KW-1185">Reference proteome</keyword>
<sequence length="299" mass="33431">MIKMIESYLKAGKIVSKVRREAAGIIRDGLPIIELVNYVEDRIIEEGGRPAFPCNVSVNEVTAHYTSPPGDDSVIGDGDLVKLDLGAHVDGFIADTAITVPVGDVDDKCHQMMDAAREALENAISTIRAGVEVGEIGRVIEETIHSHGMNPVSNLTGHSMERWILHSGLSIPNINERNTHQLEEGDVLAIEPFATDGVGLVTDMPQTYIFRFLRERPLRLVHARRVLGKIREEYHALPFAQRWLEEYFDAKRLNASMRMLIQSRAIYPYHVLREKSGAMVAQWEHTVIVEEDGCTVITE</sequence>
<gene>
    <name evidence="1" type="primary">map</name>
    <name type="ordered locus">MTH_1296</name>
</gene>
<dbReference type="EC" id="3.4.11.18" evidence="1"/>
<dbReference type="EMBL" id="AE000666">
    <property type="protein sequence ID" value="AAB85776.1"/>
    <property type="molecule type" value="Genomic_DNA"/>
</dbReference>
<dbReference type="PIR" id="C69039">
    <property type="entry name" value="C69039"/>
</dbReference>
<dbReference type="SMR" id="O27355"/>
<dbReference type="FunCoup" id="O27355">
    <property type="interactions" value="214"/>
</dbReference>
<dbReference type="STRING" id="187420.MTH_1296"/>
<dbReference type="PaxDb" id="187420-MTH_1296"/>
<dbReference type="EnsemblBacteria" id="AAB85776">
    <property type="protein sequence ID" value="AAB85776"/>
    <property type="gene ID" value="MTH_1296"/>
</dbReference>
<dbReference type="KEGG" id="mth:MTH_1296"/>
<dbReference type="PATRIC" id="fig|187420.15.peg.1267"/>
<dbReference type="HOGENOM" id="CLU_015857_7_0_2"/>
<dbReference type="InParanoid" id="O27355"/>
<dbReference type="Proteomes" id="UP000005223">
    <property type="component" value="Chromosome"/>
</dbReference>
<dbReference type="GO" id="GO:0005737">
    <property type="term" value="C:cytoplasm"/>
    <property type="evidence" value="ECO:0007669"/>
    <property type="project" value="TreeGrafter"/>
</dbReference>
<dbReference type="GO" id="GO:0004239">
    <property type="term" value="F:initiator methionyl aminopeptidase activity"/>
    <property type="evidence" value="ECO:0007669"/>
    <property type="project" value="UniProtKB-UniRule"/>
</dbReference>
<dbReference type="GO" id="GO:0046872">
    <property type="term" value="F:metal ion binding"/>
    <property type="evidence" value="ECO:0007669"/>
    <property type="project" value="UniProtKB-UniRule"/>
</dbReference>
<dbReference type="GO" id="GO:0070006">
    <property type="term" value="F:metalloaminopeptidase activity"/>
    <property type="evidence" value="ECO:0007669"/>
    <property type="project" value="UniProtKB-UniRule"/>
</dbReference>
<dbReference type="GO" id="GO:0006508">
    <property type="term" value="P:proteolysis"/>
    <property type="evidence" value="ECO:0007669"/>
    <property type="project" value="UniProtKB-KW"/>
</dbReference>
<dbReference type="CDD" id="cd01088">
    <property type="entry name" value="MetAP2"/>
    <property type="match status" value="1"/>
</dbReference>
<dbReference type="Gene3D" id="3.90.230.10">
    <property type="entry name" value="Creatinase/methionine aminopeptidase superfamily"/>
    <property type="match status" value="1"/>
</dbReference>
<dbReference type="Gene3D" id="1.10.10.10">
    <property type="entry name" value="Winged helix-like DNA-binding domain superfamily/Winged helix DNA-binding domain"/>
    <property type="match status" value="1"/>
</dbReference>
<dbReference type="HAMAP" id="MF_01975">
    <property type="entry name" value="MetAP_2_arc"/>
    <property type="match status" value="1"/>
</dbReference>
<dbReference type="InterPro" id="IPR036005">
    <property type="entry name" value="Creatinase/aminopeptidase-like"/>
</dbReference>
<dbReference type="InterPro" id="IPR050247">
    <property type="entry name" value="Met_Aminopeptidase_Type2"/>
</dbReference>
<dbReference type="InterPro" id="IPR028595">
    <property type="entry name" value="MetAP_archaeal"/>
</dbReference>
<dbReference type="InterPro" id="IPR000994">
    <property type="entry name" value="Pept_M24"/>
</dbReference>
<dbReference type="InterPro" id="IPR001714">
    <property type="entry name" value="Pept_M24_MAP"/>
</dbReference>
<dbReference type="InterPro" id="IPR002468">
    <property type="entry name" value="Pept_M24A_MAP2"/>
</dbReference>
<dbReference type="InterPro" id="IPR018349">
    <property type="entry name" value="Pept_M24A_MAP2_BS"/>
</dbReference>
<dbReference type="InterPro" id="IPR036388">
    <property type="entry name" value="WH-like_DNA-bd_sf"/>
</dbReference>
<dbReference type="InterPro" id="IPR036390">
    <property type="entry name" value="WH_DNA-bd_sf"/>
</dbReference>
<dbReference type="NCBIfam" id="TIGR00501">
    <property type="entry name" value="met_pdase_II"/>
    <property type="match status" value="1"/>
</dbReference>
<dbReference type="PANTHER" id="PTHR45777">
    <property type="entry name" value="METHIONINE AMINOPEPTIDASE 2"/>
    <property type="match status" value="1"/>
</dbReference>
<dbReference type="PANTHER" id="PTHR45777:SF2">
    <property type="entry name" value="METHIONINE AMINOPEPTIDASE 2"/>
    <property type="match status" value="1"/>
</dbReference>
<dbReference type="Pfam" id="PF00557">
    <property type="entry name" value="Peptidase_M24"/>
    <property type="match status" value="1"/>
</dbReference>
<dbReference type="PRINTS" id="PR00599">
    <property type="entry name" value="MAPEPTIDASE"/>
</dbReference>
<dbReference type="SUPFAM" id="SSF55920">
    <property type="entry name" value="Creatinase/aminopeptidase"/>
    <property type="match status" value="1"/>
</dbReference>
<dbReference type="SUPFAM" id="SSF46785">
    <property type="entry name" value="Winged helix' DNA-binding domain"/>
    <property type="match status" value="1"/>
</dbReference>
<dbReference type="PROSITE" id="PS01202">
    <property type="entry name" value="MAP_2"/>
    <property type="match status" value="1"/>
</dbReference>
<accession>O27355</accession>
<protein>
    <recommendedName>
        <fullName evidence="1">Methionine aminopeptidase</fullName>
        <shortName evidence="1">MAP</shortName>
        <shortName evidence="1">MetAP</shortName>
        <ecNumber evidence="1">3.4.11.18</ecNumber>
    </recommendedName>
    <alternativeName>
        <fullName evidence="1">Peptidase M</fullName>
    </alternativeName>
</protein>
<organism>
    <name type="scientific">Methanothermobacter thermautotrophicus (strain ATCC 29096 / DSM 1053 / JCM 10044 / NBRC 100330 / Delta H)</name>
    <name type="common">Methanobacterium thermoautotrophicum</name>
    <dbReference type="NCBI Taxonomy" id="187420"/>
    <lineage>
        <taxon>Archaea</taxon>
        <taxon>Methanobacteriati</taxon>
        <taxon>Methanobacteriota</taxon>
        <taxon>Methanomada group</taxon>
        <taxon>Methanobacteria</taxon>
        <taxon>Methanobacteriales</taxon>
        <taxon>Methanobacteriaceae</taxon>
        <taxon>Methanothermobacter</taxon>
    </lineage>
</organism>
<feature type="chain" id="PRO_0000148976" description="Methionine aminopeptidase">
    <location>
        <begin position="1"/>
        <end position="299"/>
    </location>
</feature>
<feature type="binding site" evidence="1">
    <location>
        <position position="64"/>
    </location>
    <ligand>
        <name>substrate</name>
    </ligand>
</feature>
<feature type="binding site" evidence="1">
    <location>
        <position position="84"/>
    </location>
    <ligand>
        <name>a divalent metal cation</name>
        <dbReference type="ChEBI" id="CHEBI:60240"/>
        <label>1</label>
    </ligand>
</feature>
<feature type="binding site" evidence="1">
    <location>
        <position position="95"/>
    </location>
    <ligand>
        <name>a divalent metal cation</name>
        <dbReference type="ChEBI" id="CHEBI:60240"/>
        <label>1</label>
    </ligand>
</feature>
<feature type="binding site" evidence="1">
    <location>
        <position position="95"/>
    </location>
    <ligand>
        <name>a divalent metal cation</name>
        <dbReference type="ChEBI" id="CHEBI:60240"/>
        <label>2</label>
        <note>catalytic</note>
    </ligand>
</feature>
<feature type="binding site" evidence="1">
    <location>
        <position position="158"/>
    </location>
    <ligand>
        <name>a divalent metal cation</name>
        <dbReference type="ChEBI" id="CHEBI:60240"/>
        <label>2</label>
        <note>catalytic</note>
    </ligand>
</feature>
<feature type="binding site" evidence="1">
    <location>
        <position position="166"/>
    </location>
    <ligand>
        <name>substrate</name>
    </ligand>
</feature>
<feature type="binding site" evidence="1">
    <location>
        <position position="191"/>
    </location>
    <ligand>
        <name>a divalent metal cation</name>
        <dbReference type="ChEBI" id="CHEBI:60240"/>
        <label>2</label>
        <note>catalytic</note>
    </ligand>
</feature>
<feature type="binding site" evidence="1">
    <location>
        <position position="284"/>
    </location>
    <ligand>
        <name>a divalent metal cation</name>
        <dbReference type="ChEBI" id="CHEBI:60240"/>
        <label>1</label>
    </ligand>
</feature>
<feature type="binding site" evidence="1">
    <location>
        <position position="284"/>
    </location>
    <ligand>
        <name>a divalent metal cation</name>
        <dbReference type="ChEBI" id="CHEBI:60240"/>
        <label>2</label>
        <note>catalytic</note>
    </ligand>
</feature>